<proteinExistence type="evidence at transcript level"/>
<dbReference type="EMBL" id="BC109624">
    <property type="protein sequence ID" value="AAI09625.1"/>
    <property type="molecule type" value="mRNA"/>
</dbReference>
<dbReference type="RefSeq" id="NP_001072974.1">
    <property type="nucleotide sequence ID" value="NM_001079506.2"/>
</dbReference>
<dbReference type="SMR" id="Q32LE3"/>
<dbReference type="FunCoup" id="Q32LE3">
    <property type="interactions" value="266"/>
</dbReference>
<dbReference type="STRING" id="9913.ENSBTAP00000052557"/>
<dbReference type="PaxDb" id="9913-ENSBTAP00000052557"/>
<dbReference type="Ensembl" id="ENSBTAT00000016356.3">
    <property type="protein sequence ID" value="ENSBTAP00000052557.1"/>
    <property type="gene ID" value="ENSBTAG00000012320.3"/>
</dbReference>
<dbReference type="GeneID" id="512850"/>
<dbReference type="KEGG" id="bta:512850"/>
<dbReference type="CTD" id="1068"/>
<dbReference type="VEuPathDB" id="HostDB:ENSBTAG00000012320"/>
<dbReference type="VGNC" id="VGNC:27233">
    <property type="gene designation" value="CETN1"/>
</dbReference>
<dbReference type="eggNOG" id="KOG0028">
    <property type="taxonomic scope" value="Eukaryota"/>
</dbReference>
<dbReference type="GeneTree" id="ENSGT00940000157209"/>
<dbReference type="HOGENOM" id="CLU_061288_18_2_1"/>
<dbReference type="InParanoid" id="Q32LE3"/>
<dbReference type="OMA" id="CIEAREF"/>
<dbReference type="OrthoDB" id="343296at2759"/>
<dbReference type="TreeFam" id="TF101141"/>
<dbReference type="Reactome" id="R-BTA-9646399">
    <property type="pathway name" value="Aggrephagy"/>
</dbReference>
<dbReference type="Proteomes" id="UP000009136">
    <property type="component" value="Chromosome 24"/>
</dbReference>
<dbReference type="Bgee" id="ENSBTAG00000012320">
    <property type="expression patterns" value="Expressed in semen and 21 other cell types or tissues"/>
</dbReference>
<dbReference type="GO" id="GO:0005814">
    <property type="term" value="C:centriole"/>
    <property type="evidence" value="ECO:0000318"/>
    <property type="project" value="GO_Central"/>
</dbReference>
<dbReference type="GO" id="GO:0005813">
    <property type="term" value="C:centrosome"/>
    <property type="evidence" value="ECO:0000318"/>
    <property type="project" value="GO_Central"/>
</dbReference>
<dbReference type="GO" id="GO:0005737">
    <property type="term" value="C:cytoplasm"/>
    <property type="evidence" value="ECO:0007669"/>
    <property type="project" value="UniProtKB-KW"/>
</dbReference>
<dbReference type="GO" id="GO:0005634">
    <property type="term" value="C:nucleus"/>
    <property type="evidence" value="ECO:0000318"/>
    <property type="project" value="GO_Central"/>
</dbReference>
<dbReference type="GO" id="GO:0000922">
    <property type="term" value="C:spindle pole"/>
    <property type="evidence" value="ECO:0007669"/>
    <property type="project" value="Ensembl"/>
</dbReference>
<dbReference type="GO" id="GO:0005509">
    <property type="term" value="F:calcium ion binding"/>
    <property type="evidence" value="ECO:0000318"/>
    <property type="project" value="GO_Central"/>
</dbReference>
<dbReference type="GO" id="GO:0051301">
    <property type="term" value="P:cell division"/>
    <property type="evidence" value="ECO:0007669"/>
    <property type="project" value="UniProtKB-KW"/>
</dbReference>
<dbReference type="GO" id="GO:0007099">
    <property type="term" value="P:centriole replication"/>
    <property type="evidence" value="ECO:0000318"/>
    <property type="project" value="GO_Central"/>
</dbReference>
<dbReference type="GO" id="GO:0000226">
    <property type="term" value="P:microtubule cytoskeleton organization"/>
    <property type="evidence" value="ECO:0000318"/>
    <property type="project" value="GO_Central"/>
</dbReference>
<dbReference type="CDD" id="cd00051">
    <property type="entry name" value="EFh"/>
    <property type="match status" value="2"/>
</dbReference>
<dbReference type="FunFam" id="1.10.238.10:FF:000077">
    <property type="entry name" value="Centrin 1"/>
    <property type="match status" value="1"/>
</dbReference>
<dbReference type="FunFam" id="1.10.238.10:FF:000070">
    <property type="entry name" value="Centrin-1"/>
    <property type="match status" value="1"/>
</dbReference>
<dbReference type="Gene3D" id="1.10.238.10">
    <property type="entry name" value="EF-hand"/>
    <property type="match status" value="2"/>
</dbReference>
<dbReference type="InterPro" id="IPR050230">
    <property type="entry name" value="CALM/Myosin/TropC-like"/>
</dbReference>
<dbReference type="InterPro" id="IPR011992">
    <property type="entry name" value="EF-hand-dom_pair"/>
</dbReference>
<dbReference type="InterPro" id="IPR018247">
    <property type="entry name" value="EF_Hand_1_Ca_BS"/>
</dbReference>
<dbReference type="InterPro" id="IPR002048">
    <property type="entry name" value="EF_hand_dom"/>
</dbReference>
<dbReference type="InterPro" id="IPR000629">
    <property type="entry name" value="RNA-helicase_DEAD-box_CS"/>
</dbReference>
<dbReference type="PANTHER" id="PTHR23048:SF59">
    <property type="entry name" value="EF-HAND SUPERFAMILY PROTEIN"/>
    <property type="match status" value="1"/>
</dbReference>
<dbReference type="PANTHER" id="PTHR23048">
    <property type="entry name" value="MYOSIN LIGHT CHAIN 1, 3"/>
    <property type="match status" value="1"/>
</dbReference>
<dbReference type="Pfam" id="PF13499">
    <property type="entry name" value="EF-hand_7"/>
    <property type="match status" value="2"/>
</dbReference>
<dbReference type="SMART" id="SM00054">
    <property type="entry name" value="EFh"/>
    <property type="match status" value="4"/>
</dbReference>
<dbReference type="SUPFAM" id="SSF47473">
    <property type="entry name" value="EF-hand"/>
    <property type="match status" value="1"/>
</dbReference>
<dbReference type="PROSITE" id="PS00018">
    <property type="entry name" value="EF_HAND_1"/>
    <property type="match status" value="2"/>
</dbReference>
<dbReference type="PROSITE" id="PS50222">
    <property type="entry name" value="EF_HAND_2"/>
    <property type="match status" value="4"/>
</dbReference>
<feature type="chain" id="PRO_0000244557" description="Centrin-1">
    <location>
        <begin position="1"/>
        <end position="172"/>
    </location>
</feature>
<feature type="domain" description="EF-hand 1" evidence="4">
    <location>
        <begin position="28"/>
        <end position="63"/>
    </location>
</feature>
<feature type="domain" description="EF-hand 2" evidence="4">
    <location>
        <begin position="64"/>
        <end position="99"/>
    </location>
</feature>
<feature type="domain" description="EF-hand 3" evidence="4">
    <location>
        <begin position="101"/>
        <end position="136"/>
    </location>
</feature>
<feature type="domain" description="EF-hand 4" evidence="4">
    <location>
        <begin position="137"/>
        <end position="172"/>
    </location>
</feature>
<feature type="region of interest" description="Disordered" evidence="5">
    <location>
        <begin position="1"/>
        <end position="30"/>
    </location>
</feature>
<feature type="binding site" evidence="4">
    <location>
        <position position="41"/>
    </location>
    <ligand>
        <name>Ca(2+)</name>
        <dbReference type="ChEBI" id="CHEBI:29108"/>
        <label>1</label>
    </ligand>
</feature>
<feature type="binding site" evidence="4">
    <location>
        <position position="43"/>
    </location>
    <ligand>
        <name>Ca(2+)</name>
        <dbReference type="ChEBI" id="CHEBI:29108"/>
        <label>1</label>
    </ligand>
</feature>
<feature type="binding site" evidence="4">
    <location>
        <position position="45"/>
    </location>
    <ligand>
        <name>Ca(2+)</name>
        <dbReference type="ChEBI" id="CHEBI:29108"/>
        <label>1</label>
    </ligand>
</feature>
<feature type="binding site" evidence="4">
    <location>
        <position position="47"/>
    </location>
    <ligand>
        <name>Ca(2+)</name>
        <dbReference type="ChEBI" id="CHEBI:29108"/>
        <label>1</label>
    </ligand>
</feature>
<feature type="binding site" evidence="4">
    <location>
        <position position="52"/>
    </location>
    <ligand>
        <name>Ca(2+)</name>
        <dbReference type="ChEBI" id="CHEBI:29108"/>
        <label>1</label>
    </ligand>
</feature>
<feature type="binding site" evidence="4">
    <location>
        <position position="150"/>
    </location>
    <ligand>
        <name>Ca(2+)</name>
        <dbReference type="ChEBI" id="CHEBI:29108"/>
        <label>2</label>
    </ligand>
</feature>
<feature type="binding site" evidence="4">
    <location>
        <position position="152"/>
    </location>
    <ligand>
        <name>Ca(2+)</name>
        <dbReference type="ChEBI" id="CHEBI:29108"/>
        <label>2</label>
    </ligand>
</feature>
<feature type="binding site" evidence="4">
    <location>
        <position position="154"/>
    </location>
    <ligand>
        <name>Ca(2+)</name>
        <dbReference type="ChEBI" id="CHEBI:29108"/>
        <label>2</label>
    </ligand>
</feature>
<feature type="binding site" evidence="4">
    <location>
        <position position="156"/>
    </location>
    <ligand>
        <name>Ca(2+)</name>
        <dbReference type="ChEBI" id="CHEBI:29108"/>
        <label>2</label>
    </ligand>
</feature>
<feature type="binding site" evidence="4">
    <location>
        <position position="161"/>
    </location>
    <ligand>
        <name>Ca(2+)</name>
        <dbReference type="ChEBI" id="CHEBI:29108"/>
        <label>2</label>
    </ligand>
</feature>
<comment type="function">
    <text evidence="2 3">Plays a fundamental role in microtubule-organizing center structure and function (By similarity). Plays a role in sperm cilia formation (By similarity).</text>
</comment>
<comment type="subunit">
    <text evidence="1 3">Monomer (By similarity). Interacts with CIMAP3 (By similarity). Interacts with USP49 (By similarity).</text>
</comment>
<comment type="subcellular location">
    <subcellularLocation>
        <location>Cytoplasm</location>
        <location>Cytoskeleton</location>
        <location>Microtubule organizing center</location>
        <location>Centrosome</location>
    </subcellularLocation>
    <text evidence="1">Centrosome of interphase and mitotic cells.</text>
</comment>
<comment type="miscellaneous">
    <text evidence="1">Binds two moles of calcium per mole of protein.</text>
</comment>
<comment type="similarity">
    <text evidence="6">Belongs to the centrin family.</text>
</comment>
<keyword id="KW-0106">Calcium</keyword>
<keyword id="KW-0131">Cell cycle</keyword>
<keyword id="KW-0132">Cell division</keyword>
<keyword id="KW-0963">Cytoplasm</keyword>
<keyword id="KW-0206">Cytoskeleton</keyword>
<keyword id="KW-0479">Metal-binding</keyword>
<keyword id="KW-0498">Mitosis</keyword>
<keyword id="KW-1185">Reference proteome</keyword>
<keyword id="KW-0677">Repeat</keyword>
<name>CETN1_BOVIN</name>
<sequence>MASSYRKPTVASTSQKRKVGPKPELTEEQKQEVREAFDLFDADGSGTIDVKELKVAMRALGFEPRKEEMKRMIADVDKEGTGKISFNDFLAVMTQKMAEKDTKEEILKAFRLFDDDETGKISFKNLKRVAKELGENLTDEELQEMIDEADRDGDGEVNEDEFLRIMKKTNLY</sequence>
<protein>
    <recommendedName>
        <fullName>Centrin-1</fullName>
    </recommendedName>
</protein>
<reference key="1">
    <citation type="submission" date="2005-11" db="EMBL/GenBank/DDBJ databases">
        <authorList>
            <consortium name="NIH - Mammalian Gene Collection (MGC) project"/>
        </authorList>
    </citation>
    <scope>NUCLEOTIDE SEQUENCE [LARGE SCALE MRNA]</scope>
    <source>
        <strain>Crossbred X Angus</strain>
        <tissue>Liver</tissue>
    </source>
</reference>
<organism>
    <name type="scientific">Bos taurus</name>
    <name type="common">Bovine</name>
    <dbReference type="NCBI Taxonomy" id="9913"/>
    <lineage>
        <taxon>Eukaryota</taxon>
        <taxon>Metazoa</taxon>
        <taxon>Chordata</taxon>
        <taxon>Craniata</taxon>
        <taxon>Vertebrata</taxon>
        <taxon>Euteleostomi</taxon>
        <taxon>Mammalia</taxon>
        <taxon>Eutheria</taxon>
        <taxon>Laurasiatheria</taxon>
        <taxon>Artiodactyla</taxon>
        <taxon>Ruminantia</taxon>
        <taxon>Pecora</taxon>
        <taxon>Bovidae</taxon>
        <taxon>Bovinae</taxon>
        <taxon>Bos</taxon>
    </lineage>
</organism>
<accession>Q32LE3</accession>
<evidence type="ECO:0000250" key="1"/>
<evidence type="ECO:0000250" key="2">
    <source>
        <dbReference type="UniProtKB" id="P41209"/>
    </source>
</evidence>
<evidence type="ECO:0000250" key="3">
    <source>
        <dbReference type="UniProtKB" id="Q12798"/>
    </source>
</evidence>
<evidence type="ECO:0000255" key="4">
    <source>
        <dbReference type="PROSITE-ProRule" id="PRU00448"/>
    </source>
</evidence>
<evidence type="ECO:0000256" key="5">
    <source>
        <dbReference type="SAM" id="MobiDB-lite"/>
    </source>
</evidence>
<evidence type="ECO:0000305" key="6"/>
<gene>
    <name type="primary">CETN1</name>
</gene>